<comment type="function">
    <text evidence="1">Plays critical roles in virus replication, from virus entry and uncoating to assembly and budding of the virus particle. M1 binding to ribonucleocapsids (RNPs) in nucleus seems to inhibit viral transcription. Interaction of viral NEP with M1-RNP is thought to promote nuclear export of the complex, which is targeted to the virion assembly site at the apical plasma membrane in polarized epithelial cells. Interactions with NA and HA may bring M1, a non-raft-associated protein, into lipid rafts. Forms a continuous shell on the inner side of the lipid bilayer in virion, where it binds the RNP. During virus entry into cell, the M2 ion channel acidifies the internal virion core, inducing M1 dissociation from the RNP. M1-free RNPs are transported to the nucleus, where viral transcription and replication can take place.</text>
</comment>
<comment type="function">
    <text evidence="1">Determines the virion's shape: spherical or filamentous. Clinical isolates of influenza are characterized by the presence of significant proportion of filamentous virions, whereas after multiple passage on eggs or cell culture, virions have only spherical morphology. Filamentous virions are thought to be important to infect neighboring cells, and spherical virions more suited to spread through aerosol between hosts organisms.</text>
</comment>
<comment type="subunit">
    <text evidence="1">Homodimer and homomultimer. Interacts with NEP. Binds ribonucleocapsid by both interacting with genomic RNA and NP protein. May interact with HA and NA. Cannot bind NP without genomic RNA.</text>
</comment>
<comment type="subcellular location">
    <subcellularLocation>
        <location evidence="1">Virion membrane</location>
        <topology evidence="1">Peripheral membrane protein</topology>
        <orientation evidence="1">Cytoplasmic side</orientation>
    </subcellularLocation>
    <subcellularLocation>
        <location evidence="1">Host nucleus</location>
    </subcellularLocation>
</comment>
<comment type="alternative products">
    <event type="alternative splicing"/>
    <isoform>
        <id>A4U7A8-1</id>
        <name>M1</name>
        <sequence type="displayed"/>
    </isoform>
    <isoform>
        <id>A4U7A7-1</id>
        <name>M2</name>
        <sequence type="external"/>
    </isoform>
    <text>Only the first 9 residues are shared by the 2 isoforms.</text>
</comment>
<comment type="miscellaneous">
    <text evidence="1">Most abundant protein in virion. When expressed alone can form virus-like particles in transfected cells.</text>
</comment>
<comment type="similarity">
    <text evidence="1">Belongs to the influenza viruses Matrix protein M1 family.</text>
</comment>
<accession>A4U7A8</accession>
<feature type="chain" id="PRO_0000372907" description="Matrix protein 1">
    <location>
        <begin position="1"/>
        <end position="252"/>
    </location>
</feature>
<feature type="region of interest" description="Membrane-binding" evidence="1">
    <location>
        <begin position="1"/>
        <end position="164"/>
    </location>
</feature>
<feature type="region of interest" description="RNP-binding" evidence="1">
    <location>
        <begin position="165"/>
        <end position="252"/>
    </location>
</feature>
<feature type="short sequence motif" description="Nuclear localization signal" evidence="1">
    <location>
        <begin position="101"/>
        <end position="105"/>
    </location>
</feature>
<protein>
    <recommendedName>
        <fullName evidence="1">Matrix protein 1</fullName>
        <shortName evidence="1">M1</shortName>
    </recommendedName>
</protein>
<organismHost>
    <name type="scientific">Aves</name>
    <dbReference type="NCBI Taxonomy" id="8782"/>
</organismHost>
<organismHost>
    <name type="scientific">Homo sapiens</name>
    <name type="common">Human</name>
    <dbReference type="NCBI Taxonomy" id="9606"/>
</organismHost>
<organismHost>
    <name type="scientific">Sus scrofa</name>
    <name type="common">Pig</name>
    <dbReference type="NCBI Taxonomy" id="9823"/>
</organismHost>
<evidence type="ECO:0000255" key="1">
    <source>
        <dbReference type="HAMAP-Rule" id="MF_04068"/>
    </source>
</evidence>
<keyword id="KW-0025">Alternative splicing</keyword>
<keyword id="KW-1048">Host nucleus</keyword>
<keyword id="KW-0472">Membrane</keyword>
<keyword id="KW-0694">RNA-binding</keyword>
<keyword id="KW-0468">Viral matrix protein</keyword>
<keyword id="KW-0946">Virion</keyword>
<sequence length="252" mass="27834">MSLLTEVETYVLSIVPSGPLKAEIAQRLEDVFAGKNTDLEALMEWLKTRPILSPLTKGILGFVFTLTVPSERGLQRRRFVQNALNGNGDPNNMDRAVKLYRKLKREITFHGAKEIALSYSAGALASCMGLIYNRMGAVTTEVAFGLVCATCEQIADSQHRSHRQMVTTTNPLIRHENRMVLASTTAKAMEQMAGSSEQAAEAMEVASQARQMVQAMRAIGTHPSSSAGLKDDLLENLQAYQKRMGVQMQRFK</sequence>
<reference key="1">
    <citation type="submission" date="2007-04" db="EMBL/GenBank/DDBJ databases">
        <title>The NIAID influenza genome sequencing project.</title>
        <authorList>
            <person name="Spiro D."/>
            <person name="Sengamalay N."/>
            <person name="Boyne A."/>
            <person name="Bera J."/>
            <person name="Ghedin E."/>
            <person name="Zaborsky J."/>
            <person name="Subbu V."/>
            <person name="Sparenborg J."/>
            <person name="Gallagher T."/>
            <person name="Overton L."/>
            <person name="Althoff R."/>
            <person name="Liu X."/>
            <person name="Sitz J."/>
            <person name="Katzel D."/>
            <person name="Neupane R."/>
            <person name="Shumway M."/>
            <person name="Koo H."/>
            <person name="Griesemer S."/>
            <person name="StGeorge K."/>
            <person name="Bennett R."/>
            <person name="Taylor J."/>
            <person name="Bao Y."/>
            <person name="Bolotov P."/>
            <person name="Dernovoy D."/>
            <person name="Kiryutin B."/>
            <person name="Lipman D.J."/>
            <person name="Tatusova T."/>
        </authorList>
    </citation>
    <scope>NUCLEOTIDE SEQUENCE [GENOMIC RNA]</scope>
</reference>
<reference key="2">
    <citation type="submission" date="2007-04" db="EMBL/GenBank/DDBJ databases">
        <authorList>
            <consortium name="The NIAID Influenza Genome Sequencing Consortium"/>
        </authorList>
    </citation>
    <scope>NUCLEOTIDE SEQUENCE [GENOMIC RNA]</scope>
</reference>
<proteinExistence type="inferred from homology"/>
<organism>
    <name type="scientific">Influenza A virus (strain A/USA:Albany/12/1951 H1N1)</name>
    <dbReference type="NCBI Taxonomy" id="425580"/>
    <lineage>
        <taxon>Viruses</taxon>
        <taxon>Riboviria</taxon>
        <taxon>Orthornavirae</taxon>
        <taxon>Negarnaviricota</taxon>
        <taxon>Polyploviricotina</taxon>
        <taxon>Insthoviricetes</taxon>
        <taxon>Articulavirales</taxon>
        <taxon>Orthomyxoviridae</taxon>
        <taxon>Alphainfluenzavirus</taxon>
        <taxon>Alphainfluenzavirus influenzae</taxon>
        <taxon>Influenza A virus</taxon>
    </lineage>
</organism>
<dbReference type="EMBL" id="CY021822">
    <property type="protein sequence ID" value="ABP49482.1"/>
    <property type="molecule type" value="Viral_cRNA"/>
</dbReference>
<dbReference type="SMR" id="A4U7A8"/>
<dbReference type="Proteomes" id="UP000007556">
    <property type="component" value="Genome"/>
</dbReference>
<dbReference type="GO" id="GO:0042025">
    <property type="term" value="C:host cell nucleus"/>
    <property type="evidence" value="ECO:0007669"/>
    <property type="project" value="UniProtKB-SubCell"/>
</dbReference>
<dbReference type="GO" id="GO:0016020">
    <property type="term" value="C:membrane"/>
    <property type="evidence" value="ECO:0007669"/>
    <property type="project" value="UniProtKB-KW"/>
</dbReference>
<dbReference type="GO" id="GO:0055036">
    <property type="term" value="C:virion membrane"/>
    <property type="evidence" value="ECO:0007669"/>
    <property type="project" value="UniProtKB-SubCell"/>
</dbReference>
<dbReference type="GO" id="GO:0003723">
    <property type="term" value="F:RNA binding"/>
    <property type="evidence" value="ECO:0007669"/>
    <property type="project" value="UniProtKB-UniRule"/>
</dbReference>
<dbReference type="GO" id="GO:0039660">
    <property type="term" value="F:structural constituent of virion"/>
    <property type="evidence" value="ECO:0007669"/>
    <property type="project" value="UniProtKB-UniRule"/>
</dbReference>
<dbReference type="GO" id="GO:0046761">
    <property type="term" value="P:viral budding from plasma membrane"/>
    <property type="evidence" value="ECO:0007669"/>
    <property type="project" value="UniProtKB-UniRule"/>
</dbReference>
<dbReference type="FunFam" id="1.10.10.180:FF:000001">
    <property type="entry name" value="Matrix protein 1"/>
    <property type="match status" value="1"/>
</dbReference>
<dbReference type="FunFam" id="1.20.91.10:FF:000001">
    <property type="entry name" value="Matrix protein 1"/>
    <property type="match status" value="1"/>
</dbReference>
<dbReference type="Gene3D" id="1.10.10.180">
    <property type="match status" value="1"/>
</dbReference>
<dbReference type="Gene3D" id="1.20.91.10">
    <property type="match status" value="1"/>
</dbReference>
<dbReference type="HAMAP" id="MF_04068">
    <property type="entry name" value="INFV_M1"/>
    <property type="match status" value="1"/>
</dbReference>
<dbReference type="InterPro" id="IPR036039">
    <property type="entry name" value="Flu_matrix_M1"/>
</dbReference>
<dbReference type="InterPro" id="IPR013188">
    <property type="entry name" value="Flu_matrix_M1_C"/>
</dbReference>
<dbReference type="InterPro" id="IPR001561">
    <property type="entry name" value="Flu_matrix_M1_N"/>
</dbReference>
<dbReference type="InterPro" id="IPR015423">
    <property type="entry name" value="Flu_matrix_M1_N_sub1"/>
</dbReference>
<dbReference type="InterPro" id="IPR015799">
    <property type="entry name" value="Flu_matrix_M1_N_sub2"/>
</dbReference>
<dbReference type="InterPro" id="IPR037533">
    <property type="entry name" value="INFV_M1"/>
</dbReference>
<dbReference type="Pfam" id="PF00598">
    <property type="entry name" value="Flu_M1"/>
    <property type="match status" value="1"/>
</dbReference>
<dbReference type="Pfam" id="PF08289">
    <property type="entry name" value="Flu_M1_C"/>
    <property type="match status" value="1"/>
</dbReference>
<dbReference type="SMART" id="SM00759">
    <property type="entry name" value="Flu_M1_C"/>
    <property type="match status" value="1"/>
</dbReference>
<dbReference type="SUPFAM" id="SSF48145">
    <property type="entry name" value="Influenza virus matrix protein M1"/>
    <property type="match status" value="1"/>
</dbReference>
<name>M1_I51A0</name>
<gene>
    <name evidence="1" type="primary">M</name>
</gene>